<protein>
    <recommendedName>
        <fullName evidence="1">Elongation factor P--(R)-beta-lysine ligase</fullName>
        <shortName evidence="1">EF-P--(R)-beta-lysine ligase</shortName>
        <ecNumber evidence="1">6.3.2.-</ecNumber>
    </recommendedName>
    <alternativeName>
        <fullName evidence="1">EF-P post-translational modification enzyme A</fullName>
    </alternativeName>
    <alternativeName>
        <fullName evidence="1">EF-P-lysine lysyltransferase</fullName>
    </alternativeName>
</protein>
<comment type="function">
    <text evidence="1">With EpmB is involved in the beta-lysylation step of the post-translational modification of translation elongation factor P (EF-P) on 'Lys-34'. Catalyzes the ATP-dependent activation of (R)-beta-lysine produced by EpmB, forming a lysyl-adenylate, from which the beta-lysyl moiety is then transferred to the epsilon-amino group of EF-P 'Lys-34'.</text>
</comment>
<comment type="catalytic activity">
    <reaction evidence="1">
        <text>D-beta-lysine + L-lysyl-[protein] + ATP = N(6)-((3R)-3,6-diaminohexanoyl)-L-lysyl-[protein] + AMP + diphosphate + H(+)</text>
        <dbReference type="Rhea" id="RHEA:83435"/>
        <dbReference type="Rhea" id="RHEA-COMP:9752"/>
        <dbReference type="Rhea" id="RHEA-COMP:20131"/>
        <dbReference type="ChEBI" id="CHEBI:15378"/>
        <dbReference type="ChEBI" id="CHEBI:29969"/>
        <dbReference type="ChEBI" id="CHEBI:30616"/>
        <dbReference type="ChEBI" id="CHEBI:33019"/>
        <dbReference type="ChEBI" id="CHEBI:84138"/>
        <dbReference type="ChEBI" id="CHEBI:156053"/>
        <dbReference type="ChEBI" id="CHEBI:456215"/>
    </reaction>
    <physiologicalReaction direction="left-to-right" evidence="1">
        <dbReference type="Rhea" id="RHEA:83436"/>
    </physiologicalReaction>
</comment>
<comment type="subunit">
    <text evidence="1">Homodimer.</text>
</comment>
<comment type="similarity">
    <text evidence="1">Belongs to the class-II aminoacyl-tRNA synthetase family. EpmA subfamily.</text>
</comment>
<proteinExistence type="inferred from homology"/>
<evidence type="ECO:0000255" key="1">
    <source>
        <dbReference type="HAMAP-Rule" id="MF_00174"/>
    </source>
</evidence>
<accession>B7LLT9</accession>
<keyword id="KW-0067">ATP-binding</keyword>
<keyword id="KW-0436">Ligase</keyword>
<keyword id="KW-0547">Nucleotide-binding</keyword>
<feature type="chain" id="PRO_1000199262" description="Elongation factor P--(R)-beta-lysine ligase">
    <location>
        <begin position="1"/>
        <end position="325"/>
    </location>
</feature>
<feature type="binding site" evidence="1">
    <location>
        <begin position="76"/>
        <end position="78"/>
    </location>
    <ligand>
        <name>substrate</name>
    </ligand>
</feature>
<feature type="binding site" evidence="1">
    <location>
        <begin position="100"/>
        <end position="102"/>
    </location>
    <ligand>
        <name>ATP</name>
        <dbReference type="ChEBI" id="CHEBI:30616"/>
    </ligand>
</feature>
<feature type="binding site" evidence="1">
    <location>
        <position position="109"/>
    </location>
    <ligand>
        <name>ATP</name>
        <dbReference type="ChEBI" id="CHEBI:30616"/>
    </ligand>
</feature>
<feature type="binding site" evidence="1">
    <location>
        <position position="118"/>
    </location>
    <ligand>
        <name>substrate</name>
    </ligand>
</feature>
<feature type="binding site" evidence="1">
    <location>
        <begin position="244"/>
        <end position="245"/>
    </location>
    <ligand>
        <name>ATP</name>
        <dbReference type="ChEBI" id="CHEBI:30616"/>
    </ligand>
</feature>
<feature type="binding site" evidence="1">
    <location>
        <position position="251"/>
    </location>
    <ligand>
        <name>substrate</name>
    </ligand>
</feature>
<feature type="binding site" evidence="1">
    <location>
        <position position="300"/>
    </location>
    <ligand>
        <name>ATP</name>
        <dbReference type="ChEBI" id="CHEBI:30616"/>
    </ligand>
</feature>
<organism>
    <name type="scientific">Escherichia fergusonii (strain ATCC 35469 / DSM 13698 / CCUG 18766 / IAM 14443 / JCM 21226 / LMG 7866 / NBRC 102419 / NCTC 12128 / CDC 0568-73)</name>
    <dbReference type="NCBI Taxonomy" id="585054"/>
    <lineage>
        <taxon>Bacteria</taxon>
        <taxon>Pseudomonadati</taxon>
        <taxon>Pseudomonadota</taxon>
        <taxon>Gammaproteobacteria</taxon>
        <taxon>Enterobacterales</taxon>
        <taxon>Enterobacteriaceae</taxon>
        <taxon>Escherichia</taxon>
    </lineage>
</organism>
<name>EPMA_ESCF3</name>
<sequence>MSETATWQPSASIPNLLKRAAIMTEIRRFFADRGVLEVETPCMSQATVTDIHLVPFETRFVGPGHSQGMNLWLMTSPEYHMKRLLVAGCGPIFQLCRSFRNEEMGRHHNPEFTMLEWYRPHYDMYRLMNEVDDLLQQVLDCAPAESLSYQQAFQRYLEIDPLSADKAQLREAAAKLDLSNVADEEEDRDTLLQLLFTFGVEPNIGKEKPTFVYHFPASQASLAQISTEDHRVAERFEVYYKGIELANGFHELTDAREQEQRFEQDNRKRAARGLPQHPIDHNLIEALKVGMPDCSGVALGVDRLVMLALGAERLSDVIAFSVDRA</sequence>
<gene>
    <name evidence="1" type="primary">epmA</name>
    <name type="synonym">yjeA</name>
    <name type="ordered locus">EFER_4209</name>
</gene>
<reference key="1">
    <citation type="journal article" date="2009" name="PLoS Genet.">
        <title>Organised genome dynamics in the Escherichia coli species results in highly diverse adaptive paths.</title>
        <authorList>
            <person name="Touchon M."/>
            <person name="Hoede C."/>
            <person name="Tenaillon O."/>
            <person name="Barbe V."/>
            <person name="Baeriswyl S."/>
            <person name="Bidet P."/>
            <person name="Bingen E."/>
            <person name="Bonacorsi S."/>
            <person name="Bouchier C."/>
            <person name="Bouvet O."/>
            <person name="Calteau A."/>
            <person name="Chiapello H."/>
            <person name="Clermont O."/>
            <person name="Cruveiller S."/>
            <person name="Danchin A."/>
            <person name="Diard M."/>
            <person name="Dossat C."/>
            <person name="Karoui M.E."/>
            <person name="Frapy E."/>
            <person name="Garry L."/>
            <person name="Ghigo J.M."/>
            <person name="Gilles A.M."/>
            <person name="Johnson J."/>
            <person name="Le Bouguenec C."/>
            <person name="Lescat M."/>
            <person name="Mangenot S."/>
            <person name="Martinez-Jehanne V."/>
            <person name="Matic I."/>
            <person name="Nassif X."/>
            <person name="Oztas S."/>
            <person name="Petit M.A."/>
            <person name="Pichon C."/>
            <person name="Rouy Z."/>
            <person name="Ruf C.S."/>
            <person name="Schneider D."/>
            <person name="Tourret J."/>
            <person name="Vacherie B."/>
            <person name="Vallenet D."/>
            <person name="Medigue C."/>
            <person name="Rocha E.P.C."/>
            <person name="Denamur E."/>
        </authorList>
    </citation>
    <scope>NUCLEOTIDE SEQUENCE [LARGE SCALE GENOMIC DNA]</scope>
    <source>
        <strain>ATCC 35469 / DSM 13698 / BCRC 15582 / CCUG 18766 / IAM 14443 / JCM 21226 / LMG 7866 / NBRC 102419 / NCTC 12128 / CDC 0568-73</strain>
    </source>
</reference>
<dbReference type="EC" id="6.3.2.-" evidence="1"/>
<dbReference type="EMBL" id="CU928158">
    <property type="protein sequence ID" value="CAQ91629.1"/>
    <property type="molecule type" value="Genomic_DNA"/>
</dbReference>
<dbReference type="RefSeq" id="WP_000004800.1">
    <property type="nucleotide sequence ID" value="NC_011740.1"/>
</dbReference>
<dbReference type="SMR" id="B7LLT9"/>
<dbReference type="GeneID" id="75059205"/>
<dbReference type="KEGG" id="efe:EFER_4209"/>
<dbReference type="HOGENOM" id="CLU_008255_1_1_6"/>
<dbReference type="OrthoDB" id="9802326at2"/>
<dbReference type="Proteomes" id="UP000000745">
    <property type="component" value="Chromosome"/>
</dbReference>
<dbReference type="GO" id="GO:0005829">
    <property type="term" value="C:cytosol"/>
    <property type="evidence" value="ECO:0007669"/>
    <property type="project" value="TreeGrafter"/>
</dbReference>
<dbReference type="GO" id="GO:0016880">
    <property type="term" value="F:acid-ammonia (or amide) ligase activity"/>
    <property type="evidence" value="ECO:0007669"/>
    <property type="project" value="UniProtKB-UniRule"/>
</dbReference>
<dbReference type="GO" id="GO:0005524">
    <property type="term" value="F:ATP binding"/>
    <property type="evidence" value="ECO:0007669"/>
    <property type="project" value="UniProtKB-UniRule"/>
</dbReference>
<dbReference type="GO" id="GO:0004824">
    <property type="term" value="F:lysine-tRNA ligase activity"/>
    <property type="evidence" value="ECO:0007669"/>
    <property type="project" value="InterPro"/>
</dbReference>
<dbReference type="GO" id="GO:0000049">
    <property type="term" value="F:tRNA binding"/>
    <property type="evidence" value="ECO:0007669"/>
    <property type="project" value="TreeGrafter"/>
</dbReference>
<dbReference type="GO" id="GO:0006430">
    <property type="term" value="P:lysyl-tRNA aminoacylation"/>
    <property type="evidence" value="ECO:0007669"/>
    <property type="project" value="InterPro"/>
</dbReference>
<dbReference type="FunFam" id="3.30.930.10:FF:000017">
    <property type="entry name" value="Elongation factor P--(R)-beta-lysine ligase"/>
    <property type="match status" value="1"/>
</dbReference>
<dbReference type="Gene3D" id="3.30.930.10">
    <property type="entry name" value="Bira Bifunctional Protein, Domain 2"/>
    <property type="match status" value="1"/>
</dbReference>
<dbReference type="HAMAP" id="MF_00174">
    <property type="entry name" value="EF_P_modif_A"/>
    <property type="match status" value="1"/>
</dbReference>
<dbReference type="InterPro" id="IPR004364">
    <property type="entry name" value="Aa-tRNA-synt_II"/>
</dbReference>
<dbReference type="InterPro" id="IPR006195">
    <property type="entry name" value="aa-tRNA-synth_II"/>
</dbReference>
<dbReference type="InterPro" id="IPR045864">
    <property type="entry name" value="aa-tRNA-synth_II/BPL/LPL"/>
</dbReference>
<dbReference type="InterPro" id="IPR004525">
    <property type="entry name" value="EpmA"/>
</dbReference>
<dbReference type="InterPro" id="IPR018149">
    <property type="entry name" value="Lys-tRNA-synth_II_C"/>
</dbReference>
<dbReference type="NCBIfam" id="TIGR00462">
    <property type="entry name" value="genX"/>
    <property type="match status" value="1"/>
</dbReference>
<dbReference type="NCBIfam" id="NF006828">
    <property type="entry name" value="PRK09350.1"/>
    <property type="match status" value="1"/>
</dbReference>
<dbReference type="PANTHER" id="PTHR42918:SF6">
    <property type="entry name" value="ELONGATION FACTOR P--(R)-BETA-LYSINE LIGASE"/>
    <property type="match status" value="1"/>
</dbReference>
<dbReference type="PANTHER" id="PTHR42918">
    <property type="entry name" value="LYSYL-TRNA SYNTHETASE"/>
    <property type="match status" value="1"/>
</dbReference>
<dbReference type="Pfam" id="PF00152">
    <property type="entry name" value="tRNA-synt_2"/>
    <property type="match status" value="1"/>
</dbReference>
<dbReference type="PRINTS" id="PR00982">
    <property type="entry name" value="TRNASYNTHLYS"/>
</dbReference>
<dbReference type="SUPFAM" id="SSF55681">
    <property type="entry name" value="Class II aaRS and biotin synthetases"/>
    <property type="match status" value="1"/>
</dbReference>
<dbReference type="PROSITE" id="PS50862">
    <property type="entry name" value="AA_TRNA_LIGASE_II"/>
    <property type="match status" value="1"/>
</dbReference>